<accession>P86676</accession>
<keyword id="KW-0027">Amidation</keyword>
<keyword id="KW-0903">Direct protein sequencing</keyword>
<keyword id="KW-0527">Neuropeptide</keyword>
<keyword id="KW-0873">Pyrrolidone carboxylic acid</keyword>
<keyword id="KW-0964">Secreted</keyword>
<evidence type="ECO:0000250" key="1">
    <source>
        <dbReference type="UniProtKB" id="P83923"/>
    </source>
</evidence>
<evidence type="ECO:0000250" key="2">
    <source>
        <dbReference type="UniProtKB" id="P84375"/>
    </source>
</evidence>
<evidence type="ECO:0000255" key="3"/>
<evidence type="ECO:0000269" key="4">
    <source>
    </source>
</evidence>
<evidence type="ECO:0000303" key="5">
    <source>
    </source>
</evidence>
<evidence type="ECO:0000305" key="6"/>
<sequence length="9" mass="1016">QGLISFPRV</sequence>
<protein>
    <recommendedName>
        <fullName evidence="5">Periviscerokinin-1</fullName>
        <shortName evidence="5">Manre-PVK-1</shortName>
    </recommendedName>
</protein>
<proteinExistence type="evidence at protein level"/>
<feature type="peptide" id="PRO_0000395571" description="Periviscerokinin-1" evidence="4">
    <location>
        <begin position="1"/>
        <end position="9"/>
    </location>
</feature>
<feature type="modified residue" description="Pyrrolidone carboxylic acid; partial" evidence="4">
    <location>
        <position position="1"/>
    </location>
</feature>
<feature type="modified residue" description="Valine amide" evidence="4">
    <location>
        <position position="9"/>
    </location>
</feature>
<feature type="unsure residue" description="L or I" evidence="4">
    <location>
        <position position="3"/>
    </location>
</feature>
<feature type="unsure residue" description="I or L" evidence="4">
    <location>
        <position position="4"/>
    </location>
</feature>
<comment type="function">
    <text evidence="1">Mediates visceral muscle contractile activity (myotropic activity).</text>
</comment>
<comment type="subcellular location">
    <subcellularLocation>
        <location evidence="2">Secreted</location>
    </subcellularLocation>
</comment>
<comment type="mass spectrometry" mass="1015.6" error="0.01" method="MALDI" evidence="4"/>
<comment type="mass spectrometry" mass="998.6" error="0.01" method="MALDI" evidence="4">
    <text>With pyroglutamate at Gln-1.</text>
</comment>
<comment type="similarity">
    <text evidence="3">Belongs to the periviscerokinin family.</text>
</comment>
<organism>
    <name type="scientific">Mantis religiosa</name>
    <name type="common">Praying mantis</name>
    <name type="synonym">Gryllus religiosa</name>
    <dbReference type="NCBI Taxonomy" id="7507"/>
    <lineage>
        <taxon>Eukaryota</taxon>
        <taxon>Metazoa</taxon>
        <taxon>Ecdysozoa</taxon>
        <taxon>Arthropoda</taxon>
        <taxon>Hexapoda</taxon>
        <taxon>Insecta</taxon>
        <taxon>Pterygota</taxon>
        <taxon>Neoptera</taxon>
        <taxon>Polyneoptera</taxon>
        <taxon>Dictyoptera</taxon>
        <taxon>Mantodea</taxon>
        <taxon>Eumantodea</taxon>
        <taxon>Mantoidea</taxon>
        <taxon>Mantidae</taxon>
        <taxon>Mantinae</taxon>
        <taxon>Mantini</taxon>
        <taxon>Mantis</taxon>
    </lineage>
</organism>
<dbReference type="GO" id="GO:0005576">
    <property type="term" value="C:extracellular region"/>
    <property type="evidence" value="ECO:0007669"/>
    <property type="project" value="UniProtKB-SubCell"/>
</dbReference>
<dbReference type="GO" id="GO:0007218">
    <property type="term" value="P:neuropeptide signaling pathway"/>
    <property type="evidence" value="ECO:0007669"/>
    <property type="project" value="UniProtKB-KW"/>
</dbReference>
<dbReference type="InterPro" id="IPR013231">
    <property type="entry name" value="Periviscerokinin"/>
</dbReference>
<dbReference type="Pfam" id="PF08259">
    <property type="entry name" value="Periviscerokin"/>
    <property type="match status" value="1"/>
</dbReference>
<reference evidence="6" key="1">
    <citation type="journal article" date="2010" name="Peptides">
        <title>CAPA-peptides of praying mantids (Mantodea).</title>
        <authorList>
            <person name="Koehler R."/>
            <person name="Predel R."/>
        </authorList>
    </citation>
    <scope>PROTEIN SEQUENCE</scope>
    <scope>MASS SPECTROMETRY</scope>
    <scope>PYROGLUTAMATE FORMATION AT GLN-1</scope>
    <scope>AMIDATION AT VAL-9</scope>
    <source>
        <tissue evidence="4">Abdominal perisympathetic organs</tissue>
    </source>
</reference>
<name>PVK1_MANRE</name>